<comment type="function">
    <text evidence="1">Inhibits voltage-gated potassium channel.</text>
</comment>
<comment type="subcellular location">
    <subcellularLocation>
        <location evidence="4">Secreted</location>
    </subcellularLocation>
</comment>
<comment type="tissue specificity">
    <text evidence="4">Expressed by the venom gland.</text>
</comment>
<comment type="similarity">
    <text evidence="4">Belongs to the long chain scorpion toxin family. Class 1 subfamily.</text>
</comment>
<sequence>MQRNLVVLLLLGMVALSSCGLREKHFQKLVKYAVPESTLRTILQTAVHKLGKTQFGCPAYQGYCDDHCQDIKKEEGFCHGMKCKCGIPMGF</sequence>
<keyword id="KW-1015">Disulfide bond</keyword>
<keyword id="KW-0872">Ion channel impairing toxin</keyword>
<keyword id="KW-0528">Neurotoxin</keyword>
<keyword id="KW-0632">Potassium channel impairing toxin</keyword>
<keyword id="KW-0964">Secreted</keyword>
<keyword id="KW-0732">Signal</keyword>
<keyword id="KW-0800">Toxin</keyword>
<protein>
    <recommendedName>
        <fullName>Potassium channel toxin BuTXK-beta</fullName>
        <shortName>BuTXKbeta</shortName>
    </recommendedName>
    <alternativeName>
        <fullName evidence="5">Potassium channel toxin Tx690</fullName>
    </alternativeName>
</protein>
<organism>
    <name type="scientific">Buthus israelis</name>
    <name type="common">Israeli scorpion</name>
    <name type="synonym">Buthus occitanus israelis</name>
    <dbReference type="NCBI Taxonomy" id="2899555"/>
    <lineage>
        <taxon>Eukaryota</taxon>
        <taxon>Metazoa</taxon>
        <taxon>Ecdysozoa</taxon>
        <taxon>Arthropoda</taxon>
        <taxon>Chelicerata</taxon>
        <taxon>Arachnida</taxon>
        <taxon>Scorpiones</taxon>
        <taxon>Buthida</taxon>
        <taxon>Buthoidea</taxon>
        <taxon>Buthidae</taxon>
        <taxon>Buthus</taxon>
    </lineage>
</organism>
<dbReference type="EMBL" id="FJ360829">
    <property type="protein sequence ID" value="ACJ23149.1"/>
    <property type="molecule type" value="mRNA"/>
</dbReference>
<dbReference type="SMR" id="B8XH40"/>
<dbReference type="GO" id="GO:0005576">
    <property type="term" value="C:extracellular region"/>
    <property type="evidence" value="ECO:0007669"/>
    <property type="project" value="UniProtKB-SubCell"/>
</dbReference>
<dbReference type="GO" id="GO:0015459">
    <property type="term" value="F:potassium channel regulator activity"/>
    <property type="evidence" value="ECO:0007669"/>
    <property type="project" value="UniProtKB-KW"/>
</dbReference>
<dbReference type="GO" id="GO:0090729">
    <property type="term" value="F:toxin activity"/>
    <property type="evidence" value="ECO:0007669"/>
    <property type="project" value="UniProtKB-KW"/>
</dbReference>
<dbReference type="InterPro" id="IPR029237">
    <property type="entry name" value="Long_scorpion_toxin_alpha/beta"/>
</dbReference>
<dbReference type="Pfam" id="PF14866">
    <property type="entry name" value="Scorpion_toxin_alpha-beta"/>
    <property type="match status" value="1"/>
</dbReference>
<dbReference type="PROSITE" id="PS51862">
    <property type="entry name" value="BSPN_CSAB"/>
    <property type="match status" value="1"/>
</dbReference>
<evidence type="ECO:0000250" key="1">
    <source>
        <dbReference type="UniProtKB" id="P69940"/>
    </source>
</evidence>
<evidence type="ECO:0000255" key="2"/>
<evidence type="ECO:0000255" key="3">
    <source>
        <dbReference type="PROSITE-ProRule" id="PRU01209"/>
    </source>
</evidence>
<evidence type="ECO:0000305" key="4"/>
<evidence type="ECO:0000312" key="5">
    <source>
        <dbReference type="EMBL" id="ACJ23149.1"/>
    </source>
</evidence>
<reference key="1">
    <citation type="submission" date="2008-10" db="EMBL/GenBank/DDBJ databases">
        <title>Buthus occitanus israelis scorpion toxin.</title>
        <authorList>
            <person name="Zilberberg N."/>
            <person name="Kozminsky-Atias A."/>
        </authorList>
    </citation>
    <scope>NUCLEOTIDE SEQUENCE [MRNA]</scope>
</reference>
<name>KBX1_BUTIS</name>
<proteinExistence type="inferred from homology"/>
<feature type="signal peptide" evidence="2">
    <location>
        <begin position="1"/>
        <end position="20"/>
    </location>
</feature>
<feature type="propeptide" id="PRO_0000394024" evidence="4">
    <location>
        <begin position="21"/>
        <end position="27"/>
    </location>
</feature>
<feature type="chain" id="PRO_0000394025" description="Potassium channel toxin BuTXK-beta">
    <location>
        <begin position="28"/>
        <end position="91"/>
    </location>
</feature>
<feature type="domain" description="BetaSPN-type CS-alpha/beta" evidence="3">
    <location>
        <begin position="54"/>
        <end position="91"/>
    </location>
</feature>
<feature type="disulfide bond" evidence="3">
    <location>
        <begin position="57"/>
        <end position="78"/>
    </location>
</feature>
<feature type="disulfide bond" evidence="3">
    <location>
        <begin position="64"/>
        <end position="83"/>
    </location>
</feature>
<feature type="disulfide bond" evidence="3">
    <location>
        <begin position="68"/>
        <end position="85"/>
    </location>
</feature>
<accession>B8XH40</accession>